<feature type="chain" id="PRO_0000251008" description="Probable chemoreceptor glutamine deamidase CheD">
    <location>
        <begin position="1"/>
        <end position="212"/>
    </location>
</feature>
<evidence type="ECO:0000255" key="1">
    <source>
        <dbReference type="HAMAP-Rule" id="MF_01440"/>
    </source>
</evidence>
<proteinExistence type="inferred from homology"/>
<keyword id="KW-0145">Chemotaxis</keyword>
<keyword id="KW-0378">Hydrolase</keyword>
<name>CHED_BORPA</name>
<dbReference type="EC" id="3.5.1.44" evidence="1"/>
<dbReference type="EMBL" id="BX640435">
    <property type="protein sequence ID" value="CAE39261.1"/>
    <property type="molecule type" value="Genomic_DNA"/>
</dbReference>
<dbReference type="RefSeq" id="WP_010929328.1">
    <property type="nucleotide sequence ID" value="NC_002928.3"/>
</dbReference>
<dbReference type="SMR" id="Q7W3Q2"/>
<dbReference type="KEGG" id="bpa:BPP3978"/>
<dbReference type="HOGENOM" id="CLU_087854_0_0_4"/>
<dbReference type="Proteomes" id="UP000001421">
    <property type="component" value="Chromosome"/>
</dbReference>
<dbReference type="GO" id="GO:0050568">
    <property type="term" value="F:protein-glutamine glutaminase activity"/>
    <property type="evidence" value="ECO:0007669"/>
    <property type="project" value="UniProtKB-UniRule"/>
</dbReference>
<dbReference type="GO" id="GO:0006935">
    <property type="term" value="P:chemotaxis"/>
    <property type="evidence" value="ECO:0007669"/>
    <property type="project" value="UniProtKB-UniRule"/>
</dbReference>
<dbReference type="CDD" id="cd16352">
    <property type="entry name" value="CheD"/>
    <property type="match status" value="1"/>
</dbReference>
<dbReference type="Gene3D" id="3.30.1330.200">
    <property type="match status" value="1"/>
</dbReference>
<dbReference type="HAMAP" id="MF_01440">
    <property type="entry name" value="CheD"/>
    <property type="match status" value="1"/>
</dbReference>
<dbReference type="InterPro" id="IPR038592">
    <property type="entry name" value="CheD-like_sf"/>
</dbReference>
<dbReference type="InterPro" id="IPR005659">
    <property type="entry name" value="Chemorcpt_Glu_NH3ase_CheD"/>
</dbReference>
<dbReference type="InterPro" id="IPR011324">
    <property type="entry name" value="Cytotoxic_necrot_fac-like_cat"/>
</dbReference>
<dbReference type="NCBIfam" id="NF010013">
    <property type="entry name" value="PRK13487.1"/>
    <property type="match status" value="1"/>
</dbReference>
<dbReference type="NCBIfam" id="NF010014">
    <property type="entry name" value="PRK13489.1"/>
    <property type="match status" value="1"/>
</dbReference>
<dbReference type="PANTHER" id="PTHR35147">
    <property type="entry name" value="CHEMORECEPTOR GLUTAMINE DEAMIDASE CHED-RELATED"/>
    <property type="match status" value="1"/>
</dbReference>
<dbReference type="PANTHER" id="PTHR35147:SF2">
    <property type="entry name" value="CHEMORECEPTOR GLUTAMINE DEAMIDASE CHED-RELATED"/>
    <property type="match status" value="1"/>
</dbReference>
<dbReference type="Pfam" id="PF03975">
    <property type="entry name" value="CheD"/>
    <property type="match status" value="1"/>
</dbReference>
<dbReference type="SUPFAM" id="SSF64438">
    <property type="entry name" value="CNF1/YfiH-like putative cysteine hydrolases"/>
    <property type="match status" value="1"/>
</dbReference>
<accession>Q7W3Q2</accession>
<sequence length="212" mass="23148">MPARLDARATRRYFDSAFNSPAVKILPNEYYVTNGEDVMLSTVLGSCVAACIHDPVIGVGGMNHFMLPEGDIHSPASATMRYGAFAMEVLINELLKAGAVRERLEAKVFGGGAVLSAMQLMNIGERNGQFVLNYLKTEGIPVRAQDLGDVHARRINYFPRDGRVMVRKMAPHHQKAEALIAQREAAAAQTVQAETRAAPRVERFARPGGMPV</sequence>
<reference key="1">
    <citation type="journal article" date="2003" name="Nat. Genet.">
        <title>Comparative analysis of the genome sequences of Bordetella pertussis, Bordetella parapertussis and Bordetella bronchiseptica.</title>
        <authorList>
            <person name="Parkhill J."/>
            <person name="Sebaihia M."/>
            <person name="Preston A."/>
            <person name="Murphy L.D."/>
            <person name="Thomson N.R."/>
            <person name="Harris D.E."/>
            <person name="Holden M.T.G."/>
            <person name="Churcher C.M."/>
            <person name="Bentley S.D."/>
            <person name="Mungall K.L."/>
            <person name="Cerdeno-Tarraga A.-M."/>
            <person name="Temple L."/>
            <person name="James K.D."/>
            <person name="Harris B."/>
            <person name="Quail M.A."/>
            <person name="Achtman M."/>
            <person name="Atkin R."/>
            <person name="Baker S."/>
            <person name="Basham D."/>
            <person name="Bason N."/>
            <person name="Cherevach I."/>
            <person name="Chillingworth T."/>
            <person name="Collins M."/>
            <person name="Cronin A."/>
            <person name="Davis P."/>
            <person name="Doggett J."/>
            <person name="Feltwell T."/>
            <person name="Goble A."/>
            <person name="Hamlin N."/>
            <person name="Hauser H."/>
            <person name="Holroyd S."/>
            <person name="Jagels K."/>
            <person name="Leather S."/>
            <person name="Moule S."/>
            <person name="Norberczak H."/>
            <person name="O'Neil S."/>
            <person name="Ormond D."/>
            <person name="Price C."/>
            <person name="Rabbinowitsch E."/>
            <person name="Rutter S."/>
            <person name="Sanders M."/>
            <person name="Saunders D."/>
            <person name="Seeger K."/>
            <person name="Sharp S."/>
            <person name="Simmonds M."/>
            <person name="Skelton J."/>
            <person name="Squares R."/>
            <person name="Squares S."/>
            <person name="Stevens K."/>
            <person name="Unwin L."/>
            <person name="Whitehead S."/>
            <person name="Barrell B.G."/>
            <person name="Maskell D.J."/>
        </authorList>
    </citation>
    <scope>NUCLEOTIDE SEQUENCE [LARGE SCALE GENOMIC DNA]</scope>
    <source>
        <strain>12822 / ATCC BAA-587 / NCTC 13253</strain>
    </source>
</reference>
<gene>
    <name evidence="1" type="primary">cheD</name>
    <name type="ordered locus">BPP3978</name>
</gene>
<organism>
    <name type="scientific">Bordetella parapertussis (strain 12822 / ATCC BAA-587 / NCTC 13253)</name>
    <dbReference type="NCBI Taxonomy" id="257311"/>
    <lineage>
        <taxon>Bacteria</taxon>
        <taxon>Pseudomonadati</taxon>
        <taxon>Pseudomonadota</taxon>
        <taxon>Betaproteobacteria</taxon>
        <taxon>Burkholderiales</taxon>
        <taxon>Alcaligenaceae</taxon>
        <taxon>Bordetella</taxon>
    </lineage>
</organism>
<protein>
    <recommendedName>
        <fullName evidence="1">Probable chemoreceptor glutamine deamidase CheD</fullName>
        <ecNumber evidence="1">3.5.1.44</ecNumber>
    </recommendedName>
</protein>
<comment type="function">
    <text evidence="1">Probably deamidates glutamine residues to glutamate on methyl-accepting chemotaxis receptors (MCPs), playing an important role in chemotaxis.</text>
</comment>
<comment type="catalytic activity">
    <reaction evidence="1">
        <text>L-glutaminyl-[protein] + H2O = L-glutamyl-[protein] + NH4(+)</text>
        <dbReference type="Rhea" id="RHEA:16441"/>
        <dbReference type="Rhea" id="RHEA-COMP:10207"/>
        <dbReference type="Rhea" id="RHEA-COMP:10208"/>
        <dbReference type="ChEBI" id="CHEBI:15377"/>
        <dbReference type="ChEBI" id="CHEBI:28938"/>
        <dbReference type="ChEBI" id="CHEBI:29973"/>
        <dbReference type="ChEBI" id="CHEBI:30011"/>
        <dbReference type="EC" id="3.5.1.44"/>
    </reaction>
</comment>
<comment type="similarity">
    <text evidence="1">Belongs to the CheD family.</text>
</comment>